<sequence length="273" mass="29702">MLTKRIIPCLDVTLDASGGTVVKGVEFVDLKKAGDPVDLAKRYNEQGADELVFLDITASHEGRSTMIDVIERTANEVFIPLTVGGGINSVEDVRQILRAGADKVSVNTAAVKNPEFIREASNIFGSQCIVTAIDCKRNLDVENNQDKTILELEDGTLAWYEVVIYGGREPTGLDTVQWAKKVEELGSGEILLTSMNRDGTYDGFDIPITKKLSEELDIPIIASGGVGNPEHMYKGFVDGKADAGLAASIFHFGEYTVRDVKEALRAKNIPVRL</sequence>
<protein>
    <recommendedName>
        <fullName evidence="1">Imidazole glycerol phosphate synthase subunit HisF</fullName>
        <ecNumber evidence="1">4.3.2.10</ecNumber>
    </recommendedName>
    <alternativeName>
        <fullName evidence="1">IGP synthase cyclase subunit</fullName>
    </alternativeName>
    <alternativeName>
        <fullName evidence="1">IGP synthase subunit HisF</fullName>
    </alternativeName>
    <alternativeName>
        <fullName evidence="1">ImGP synthase subunit HisF</fullName>
        <shortName evidence="1">IGPS subunit HisF</shortName>
    </alternativeName>
</protein>
<dbReference type="EC" id="4.3.2.10" evidence="1"/>
<dbReference type="EMBL" id="CP000300">
    <property type="protein sequence ID" value="ABE52740.1"/>
    <property type="molecule type" value="Genomic_DNA"/>
</dbReference>
<dbReference type="RefSeq" id="WP_011499883.1">
    <property type="nucleotide sequence ID" value="NC_007955.1"/>
</dbReference>
<dbReference type="SMR" id="Q12UY6"/>
<dbReference type="STRING" id="259564.Mbur_1857"/>
<dbReference type="GeneID" id="3997518"/>
<dbReference type="KEGG" id="mbu:Mbur_1857"/>
<dbReference type="HOGENOM" id="CLU_048577_4_0_2"/>
<dbReference type="OrthoDB" id="6261at2157"/>
<dbReference type="UniPathway" id="UPA00031">
    <property type="reaction ID" value="UER00010"/>
</dbReference>
<dbReference type="Proteomes" id="UP000001979">
    <property type="component" value="Chromosome"/>
</dbReference>
<dbReference type="GO" id="GO:0005737">
    <property type="term" value="C:cytoplasm"/>
    <property type="evidence" value="ECO:0007669"/>
    <property type="project" value="UniProtKB-SubCell"/>
</dbReference>
<dbReference type="GO" id="GO:0000107">
    <property type="term" value="F:imidazoleglycerol-phosphate synthase activity"/>
    <property type="evidence" value="ECO:0007669"/>
    <property type="project" value="UniProtKB-UniRule"/>
</dbReference>
<dbReference type="GO" id="GO:0016829">
    <property type="term" value="F:lyase activity"/>
    <property type="evidence" value="ECO:0007669"/>
    <property type="project" value="UniProtKB-KW"/>
</dbReference>
<dbReference type="GO" id="GO:0000105">
    <property type="term" value="P:L-histidine biosynthetic process"/>
    <property type="evidence" value="ECO:0007669"/>
    <property type="project" value="UniProtKB-UniRule"/>
</dbReference>
<dbReference type="CDD" id="cd04731">
    <property type="entry name" value="HisF"/>
    <property type="match status" value="1"/>
</dbReference>
<dbReference type="FunFam" id="3.20.20.70:FF:000006">
    <property type="entry name" value="Imidazole glycerol phosphate synthase subunit HisF"/>
    <property type="match status" value="1"/>
</dbReference>
<dbReference type="Gene3D" id="3.20.20.70">
    <property type="entry name" value="Aldolase class I"/>
    <property type="match status" value="1"/>
</dbReference>
<dbReference type="HAMAP" id="MF_01013">
    <property type="entry name" value="HisF"/>
    <property type="match status" value="1"/>
</dbReference>
<dbReference type="InterPro" id="IPR013785">
    <property type="entry name" value="Aldolase_TIM"/>
</dbReference>
<dbReference type="InterPro" id="IPR006062">
    <property type="entry name" value="His_biosynth"/>
</dbReference>
<dbReference type="InterPro" id="IPR004651">
    <property type="entry name" value="HisF"/>
</dbReference>
<dbReference type="InterPro" id="IPR050064">
    <property type="entry name" value="IGPS_HisA/HisF"/>
</dbReference>
<dbReference type="InterPro" id="IPR011060">
    <property type="entry name" value="RibuloseP-bd_barrel"/>
</dbReference>
<dbReference type="NCBIfam" id="TIGR00735">
    <property type="entry name" value="hisF"/>
    <property type="match status" value="1"/>
</dbReference>
<dbReference type="PANTHER" id="PTHR21235:SF2">
    <property type="entry name" value="IMIDAZOLE GLYCEROL PHOSPHATE SYNTHASE HISHF"/>
    <property type="match status" value="1"/>
</dbReference>
<dbReference type="PANTHER" id="PTHR21235">
    <property type="entry name" value="IMIDAZOLE GLYCEROL PHOSPHATE SYNTHASE SUBUNIT HISF/H IGP SYNTHASE SUBUNIT HISF/H"/>
    <property type="match status" value="1"/>
</dbReference>
<dbReference type="Pfam" id="PF00977">
    <property type="entry name" value="His_biosynth"/>
    <property type="match status" value="1"/>
</dbReference>
<dbReference type="SUPFAM" id="SSF51366">
    <property type="entry name" value="Ribulose-phoshate binding barrel"/>
    <property type="match status" value="1"/>
</dbReference>
<name>HIS6_METBU</name>
<evidence type="ECO:0000255" key="1">
    <source>
        <dbReference type="HAMAP-Rule" id="MF_01013"/>
    </source>
</evidence>
<feature type="chain" id="PRO_1000063085" description="Imidazole glycerol phosphate synthase subunit HisF">
    <location>
        <begin position="1"/>
        <end position="273"/>
    </location>
</feature>
<feature type="active site" evidence="1">
    <location>
        <position position="11"/>
    </location>
</feature>
<feature type="active site" evidence="1">
    <location>
        <position position="134"/>
    </location>
</feature>
<organism>
    <name type="scientific">Methanococcoides burtonii (strain DSM 6242 / NBRC 107633 / OCM 468 / ACE-M)</name>
    <dbReference type="NCBI Taxonomy" id="259564"/>
    <lineage>
        <taxon>Archaea</taxon>
        <taxon>Methanobacteriati</taxon>
        <taxon>Methanobacteriota</taxon>
        <taxon>Stenosarchaea group</taxon>
        <taxon>Methanomicrobia</taxon>
        <taxon>Methanosarcinales</taxon>
        <taxon>Methanosarcinaceae</taxon>
        <taxon>Methanococcoides</taxon>
    </lineage>
</organism>
<accession>Q12UY6</accession>
<proteinExistence type="inferred from homology"/>
<reference key="1">
    <citation type="journal article" date="2009" name="ISME J.">
        <title>The genome sequence of the psychrophilic archaeon, Methanococcoides burtonii: the role of genome evolution in cold adaptation.</title>
        <authorList>
            <person name="Allen M.A."/>
            <person name="Lauro F.M."/>
            <person name="Williams T.J."/>
            <person name="Burg D."/>
            <person name="Siddiqui K.S."/>
            <person name="De Francisci D."/>
            <person name="Chong K.W."/>
            <person name="Pilak O."/>
            <person name="Chew H.H."/>
            <person name="De Maere M.Z."/>
            <person name="Ting L."/>
            <person name="Katrib M."/>
            <person name="Ng C."/>
            <person name="Sowers K.R."/>
            <person name="Galperin M.Y."/>
            <person name="Anderson I.J."/>
            <person name="Ivanova N."/>
            <person name="Dalin E."/>
            <person name="Martinez M."/>
            <person name="Lapidus A."/>
            <person name="Hauser L."/>
            <person name="Land M."/>
            <person name="Thomas T."/>
            <person name="Cavicchioli R."/>
        </authorList>
    </citation>
    <scope>NUCLEOTIDE SEQUENCE [LARGE SCALE GENOMIC DNA]</scope>
    <source>
        <strain>DSM 6242 / NBRC 107633 / OCM 468 / ACE-M</strain>
    </source>
</reference>
<keyword id="KW-0028">Amino-acid biosynthesis</keyword>
<keyword id="KW-0963">Cytoplasm</keyword>
<keyword id="KW-0368">Histidine biosynthesis</keyword>
<keyword id="KW-0456">Lyase</keyword>
<gene>
    <name evidence="1" type="primary">hisF</name>
    <name type="ordered locus">Mbur_1857</name>
</gene>
<comment type="function">
    <text evidence="1">IGPS catalyzes the conversion of PRFAR and glutamine to IGP, AICAR and glutamate. The HisF subunit catalyzes the cyclization activity that produces IGP and AICAR from PRFAR using the ammonia provided by the HisH subunit.</text>
</comment>
<comment type="catalytic activity">
    <reaction evidence="1">
        <text>5-[(5-phospho-1-deoxy-D-ribulos-1-ylimino)methylamino]-1-(5-phospho-beta-D-ribosyl)imidazole-4-carboxamide + L-glutamine = D-erythro-1-(imidazol-4-yl)glycerol 3-phosphate + 5-amino-1-(5-phospho-beta-D-ribosyl)imidazole-4-carboxamide + L-glutamate + H(+)</text>
        <dbReference type="Rhea" id="RHEA:24793"/>
        <dbReference type="ChEBI" id="CHEBI:15378"/>
        <dbReference type="ChEBI" id="CHEBI:29985"/>
        <dbReference type="ChEBI" id="CHEBI:58278"/>
        <dbReference type="ChEBI" id="CHEBI:58359"/>
        <dbReference type="ChEBI" id="CHEBI:58475"/>
        <dbReference type="ChEBI" id="CHEBI:58525"/>
        <dbReference type="EC" id="4.3.2.10"/>
    </reaction>
</comment>
<comment type="pathway">
    <text evidence="1">Amino-acid biosynthesis; L-histidine biosynthesis; L-histidine from 5-phospho-alpha-D-ribose 1-diphosphate: step 5/9.</text>
</comment>
<comment type="subunit">
    <text evidence="1">Heterodimer of HisH and HisF.</text>
</comment>
<comment type="subcellular location">
    <subcellularLocation>
        <location evidence="1">Cytoplasm</location>
    </subcellularLocation>
</comment>
<comment type="similarity">
    <text evidence="1">Belongs to the HisA/HisF family.</text>
</comment>